<accession>B9DQ02</accession>
<keyword id="KW-1185">Reference proteome</keyword>
<organism>
    <name type="scientific">Staphylococcus carnosus (strain TM300)</name>
    <dbReference type="NCBI Taxonomy" id="396513"/>
    <lineage>
        <taxon>Bacteria</taxon>
        <taxon>Bacillati</taxon>
        <taxon>Bacillota</taxon>
        <taxon>Bacilli</taxon>
        <taxon>Bacillales</taxon>
        <taxon>Staphylococcaceae</taxon>
        <taxon>Staphylococcus</taxon>
    </lineage>
</organism>
<comment type="similarity">
    <text evidence="1">Belongs to the UPF0637 family.</text>
</comment>
<feature type="chain" id="PRO_1000188676" description="UPF0637 protein Sca_0732">
    <location>
        <begin position="1"/>
        <end position="203"/>
    </location>
</feature>
<gene>
    <name type="ordered locus">Sca_0732</name>
</gene>
<sequence>MSKYTFTQKNFKVFEVPGLEGRMSAIESEIQPKLAALGTYFTDFLNTHTPDEFYAHIAKHARRTVNPPKDTWVAFSTNKRGYKMLPHFQIGLYEDQVFVMFGVMHEAKNKNHYIEVFEKHFDEIENLPDDYRICTDHVKMEKPLIKDLSTDELKEALHRAHQLKKGEFFIARTLSPKAPELKTDKAFKSYLEDTFDHLLKFYS</sequence>
<reference key="1">
    <citation type="journal article" date="2009" name="Appl. Environ. Microbiol.">
        <title>Genome analysis of the meat starter culture bacterium Staphylococcus carnosus TM300.</title>
        <authorList>
            <person name="Rosenstein R."/>
            <person name="Nerz C."/>
            <person name="Biswas L."/>
            <person name="Resch A."/>
            <person name="Raddatz G."/>
            <person name="Schuster S.C."/>
            <person name="Goetz F."/>
        </authorList>
    </citation>
    <scope>NUCLEOTIDE SEQUENCE [LARGE SCALE GENOMIC DNA]</scope>
    <source>
        <strain>TM300</strain>
    </source>
</reference>
<name>Y732_STACT</name>
<protein>
    <recommendedName>
        <fullName evidence="1">UPF0637 protein Sca_0732</fullName>
    </recommendedName>
</protein>
<dbReference type="EMBL" id="AM295250">
    <property type="protein sequence ID" value="CAL27642.1"/>
    <property type="molecule type" value="Genomic_DNA"/>
</dbReference>
<dbReference type="RefSeq" id="WP_015899984.1">
    <property type="nucleotide sequence ID" value="NC_012121.1"/>
</dbReference>
<dbReference type="SMR" id="B9DQ02"/>
<dbReference type="GeneID" id="93795669"/>
<dbReference type="KEGG" id="sca:SCA_0732"/>
<dbReference type="eggNOG" id="COG4493">
    <property type="taxonomic scope" value="Bacteria"/>
</dbReference>
<dbReference type="HOGENOM" id="CLU_096059_0_0_9"/>
<dbReference type="OrthoDB" id="9812818at2"/>
<dbReference type="BioCyc" id="SCAR396513:SCA_RS03710-MONOMER"/>
<dbReference type="Proteomes" id="UP000000444">
    <property type="component" value="Chromosome"/>
</dbReference>
<dbReference type="Gene3D" id="3.30.930.20">
    <property type="entry name" value="Protein of unknown function DUF1054"/>
    <property type="match status" value="1"/>
</dbReference>
<dbReference type="HAMAP" id="MF_01851">
    <property type="entry name" value="UPF0637"/>
    <property type="match status" value="1"/>
</dbReference>
<dbReference type="InterPro" id="IPR009403">
    <property type="entry name" value="UPF0637"/>
</dbReference>
<dbReference type="InterPro" id="IPR053707">
    <property type="entry name" value="UPF0637_domain_sf"/>
</dbReference>
<dbReference type="Pfam" id="PF06335">
    <property type="entry name" value="DUF1054"/>
    <property type="match status" value="1"/>
</dbReference>
<dbReference type="PIRSF" id="PIRSF021332">
    <property type="entry name" value="DUF1054"/>
    <property type="match status" value="1"/>
</dbReference>
<dbReference type="SUPFAM" id="SSF142913">
    <property type="entry name" value="YktB/PF0168-like"/>
    <property type="match status" value="1"/>
</dbReference>
<proteinExistence type="inferred from homology"/>
<evidence type="ECO:0000255" key="1">
    <source>
        <dbReference type="HAMAP-Rule" id="MF_01851"/>
    </source>
</evidence>